<comment type="function">
    <text evidence="1">Binds 16S rRNA, required for the assembly of 30S particles and may also be responsible for determining the conformation of the 16S rRNA at the A site.</text>
</comment>
<comment type="cofactor">
    <cofactor evidence="1">
        <name>Zn(2+)</name>
        <dbReference type="ChEBI" id="CHEBI:29105"/>
    </cofactor>
    <text evidence="1">Binds 1 zinc ion per subunit.</text>
</comment>
<comment type="subunit">
    <text evidence="1">Part of the 30S ribosomal subunit. Contacts proteins S3 and S10.</text>
</comment>
<comment type="similarity">
    <text evidence="1">Belongs to the universal ribosomal protein uS14 family. Zinc-binding uS14 subfamily.</text>
</comment>
<keyword id="KW-0479">Metal-binding</keyword>
<keyword id="KW-1185">Reference proteome</keyword>
<keyword id="KW-0687">Ribonucleoprotein</keyword>
<keyword id="KW-0689">Ribosomal protein</keyword>
<keyword id="KW-0694">RNA-binding</keyword>
<keyword id="KW-0699">rRNA-binding</keyword>
<keyword id="KW-0862">Zinc</keyword>
<dbReference type="EMBL" id="Z98756">
    <property type="protein sequence ID" value="CAB11449.1"/>
    <property type="molecule type" value="Genomic_DNA"/>
</dbReference>
<dbReference type="EMBL" id="AL583923">
    <property type="protein sequence ID" value="CAC30800.1"/>
    <property type="molecule type" value="Genomic_DNA"/>
</dbReference>
<dbReference type="PIR" id="T45379">
    <property type="entry name" value="T45379"/>
</dbReference>
<dbReference type="RefSeq" id="NP_302252.1">
    <property type="nucleotide sequence ID" value="NC_002677.1"/>
</dbReference>
<dbReference type="RefSeq" id="WP_010908573.1">
    <property type="nucleotide sequence ID" value="NC_002677.1"/>
</dbReference>
<dbReference type="SMR" id="O32996"/>
<dbReference type="STRING" id="272631.gene:17575694"/>
<dbReference type="KEGG" id="mle:ML1846"/>
<dbReference type="PATRIC" id="fig|272631.5.peg.3496"/>
<dbReference type="Leproma" id="ML1846"/>
<dbReference type="eggNOG" id="COG0199">
    <property type="taxonomic scope" value="Bacteria"/>
</dbReference>
<dbReference type="HOGENOM" id="CLU_139869_3_0_11"/>
<dbReference type="OrthoDB" id="9810484at2"/>
<dbReference type="Proteomes" id="UP000000806">
    <property type="component" value="Chromosome"/>
</dbReference>
<dbReference type="GO" id="GO:0005737">
    <property type="term" value="C:cytoplasm"/>
    <property type="evidence" value="ECO:0007669"/>
    <property type="project" value="UniProtKB-ARBA"/>
</dbReference>
<dbReference type="GO" id="GO:0015935">
    <property type="term" value="C:small ribosomal subunit"/>
    <property type="evidence" value="ECO:0007669"/>
    <property type="project" value="TreeGrafter"/>
</dbReference>
<dbReference type="GO" id="GO:0019843">
    <property type="term" value="F:rRNA binding"/>
    <property type="evidence" value="ECO:0007669"/>
    <property type="project" value="UniProtKB-UniRule"/>
</dbReference>
<dbReference type="GO" id="GO:0003735">
    <property type="term" value="F:structural constituent of ribosome"/>
    <property type="evidence" value="ECO:0007669"/>
    <property type="project" value="InterPro"/>
</dbReference>
<dbReference type="GO" id="GO:0008270">
    <property type="term" value="F:zinc ion binding"/>
    <property type="evidence" value="ECO:0007669"/>
    <property type="project" value="UniProtKB-UniRule"/>
</dbReference>
<dbReference type="GO" id="GO:0006412">
    <property type="term" value="P:translation"/>
    <property type="evidence" value="ECO:0007669"/>
    <property type="project" value="UniProtKB-UniRule"/>
</dbReference>
<dbReference type="FunFam" id="4.10.830.10:FF:000001">
    <property type="entry name" value="30S ribosomal protein S14 type Z"/>
    <property type="match status" value="1"/>
</dbReference>
<dbReference type="Gene3D" id="4.10.830.10">
    <property type="entry name" value="30s Ribosomal Protein S14, Chain N"/>
    <property type="match status" value="1"/>
</dbReference>
<dbReference type="HAMAP" id="MF_01364_B">
    <property type="entry name" value="Ribosomal_uS14_2_B"/>
    <property type="match status" value="1"/>
</dbReference>
<dbReference type="InterPro" id="IPR001209">
    <property type="entry name" value="Ribosomal_uS14"/>
</dbReference>
<dbReference type="InterPro" id="IPR023053">
    <property type="entry name" value="Ribosomal_uS14_bact"/>
</dbReference>
<dbReference type="InterPro" id="IPR018271">
    <property type="entry name" value="Ribosomal_uS14_CS"/>
</dbReference>
<dbReference type="InterPro" id="IPR043140">
    <property type="entry name" value="Ribosomal_uS14_sf"/>
</dbReference>
<dbReference type="NCBIfam" id="NF005974">
    <property type="entry name" value="PRK08061.1"/>
    <property type="match status" value="1"/>
</dbReference>
<dbReference type="PANTHER" id="PTHR19836">
    <property type="entry name" value="30S RIBOSOMAL PROTEIN S14"/>
    <property type="match status" value="1"/>
</dbReference>
<dbReference type="PANTHER" id="PTHR19836:SF19">
    <property type="entry name" value="SMALL RIBOSOMAL SUBUNIT PROTEIN US14M"/>
    <property type="match status" value="1"/>
</dbReference>
<dbReference type="Pfam" id="PF00253">
    <property type="entry name" value="Ribosomal_S14"/>
    <property type="match status" value="1"/>
</dbReference>
<dbReference type="SUPFAM" id="SSF57716">
    <property type="entry name" value="Glucocorticoid receptor-like (DNA-binding domain)"/>
    <property type="match status" value="1"/>
</dbReference>
<dbReference type="PROSITE" id="PS00527">
    <property type="entry name" value="RIBOSOMAL_S14"/>
    <property type="match status" value="1"/>
</dbReference>
<reference key="1">
    <citation type="journal article" date="2001" name="Nature">
        <title>Massive gene decay in the leprosy bacillus.</title>
        <authorList>
            <person name="Cole S.T."/>
            <person name="Eiglmeier K."/>
            <person name="Parkhill J."/>
            <person name="James K.D."/>
            <person name="Thomson N.R."/>
            <person name="Wheeler P.R."/>
            <person name="Honore N."/>
            <person name="Garnier T."/>
            <person name="Churcher C.M."/>
            <person name="Harris D.E."/>
            <person name="Mungall K.L."/>
            <person name="Basham D."/>
            <person name="Brown D."/>
            <person name="Chillingworth T."/>
            <person name="Connor R."/>
            <person name="Davies R.M."/>
            <person name="Devlin K."/>
            <person name="Duthoy S."/>
            <person name="Feltwell T."/>
            <person name="Fraser A."/>
            <person name="Hamlin N."/>
            <person name="Holroyd S."/>
            <person name="Hornsby T."/>
            <person name="Jagels K."/>
            <person name="Lacroix C."/>
            <person name="Maclean J."/>
            <person name="Moule S."/>
            <person name="Murphy L.D."/>
            <person name="Oliver K."/>
            <person name="Quail M.A."/>
            <person name="Rajandream M.A."/>
            <person name="Rutherford K.M."/>
            <person name="Rutter S."/>
            <person name="Seeger K."/>
            <person name="Simon S."/>
            <person name="Simmonds M."/>
            <person name="Skelton J."/>
            <person name="Squares R."/>
            <person name="Squares S."/>
            <person name="Stevens K."/>
            <person name="Taylor K."/>
            <person name="Whitehead S."/>
            <person name="Woodward J.R."/>
            <person name="Barrell B.G."/>
        </authorList>
    </citation>
    <scope>NUCLEOTIDE SEQUENCE [LARGE SCALE GENOMIC DNA]</scope>
    <source>
        <strain>TN</strain>
    </source>
</reference>
<proteinExistence type="inferred from homology"/>
<gene>
    <name evidence="1" type="primary">rpsZ</name>
    <name evidence="1" type="synonym">rpsN</name>
    <name type="ordered locus">ML1846</name>
    <name type="ORF">MLCB2492.17</name>
</gene>
<feature type="chain" id="PRO_0000130907" description="Small ribosomal subunit protein uS14">
    <location>
        <begin position="1"/>
        <end position="61"/>
    </location>
</feature>
<feature type="binding site" evidence="1">
    <location>
        <position position="24"/>
    </location>
    <ligand>
        <name>Zn(2+)</name>
        <dbReference type="ChEBI" id="CHEBI:29105"/>
    </ligand>
</feature>
<feature type="binding site" evidence="1">
    <location>
        <position position="27"/>
    </location>
    <ligand>
        <name>Zn(2+)</name>
        <dbReference type="ChEBI" id="CHEBI:29105"/>
    </ligand>
</feature>
<feature type="binding site" evidence="1">
    <location>
        <position position="40"/>
    </location>
    <ligand>
        <name>Zn(2+)</name>
        <dbReference type="ChEBI" id="CHEBI:29105"/>
    </ligand>
</feature>
<feature type="binding site" evidence="1">
    <location>
        <position position="43"/>
    </location>
    <ligand>
        <name>Zn(2+)</name>
        <dbReference type="ChEBI" id="CHEBI:29105"/>
    </ligand>
</feature>
<name>RS14Z_MYCLE</name>
<protein>
    <recommendedName>
        <fullName evidence="1">Small ribosomal subunit protein uS14</fullName>
    </recommendedName>
    <alternativeName>
        <fullName evidence="2">30S ribosomal protein S14 type Z</fullName>
    </alternativeName>
</protein>
<accession>O32996</accession>
<sequence>MAKKALVNKAARKPKFTVRGYTRCSKCGRPRAVFRKFGLCRICLREMAHAGELPGVQKSSW</sequence>
<evidence type="ECO:0000255" key="1">
    <source>
        <dbReference type="HAMAP-Rule" id="MF_01364"/>
    </source>
</evidence>
<evidence type="ECO:0000305" key="2"/>
<organism>
    <name type="scientific">Mycobacterium leprae (strain TN)</name>
    <dbReference type="NCBI Taxonomy" id="272631"/>
    <lineage>
        <taxon>Bacteria</taxon>
        <taxon>Bacillati</taxon>
        <taxon>Actinomycetota</taxon>
        <taxon>Actinomycetes</taxon>
        <taxon>Mycobacteriales</taxon>
        <taxon>Mycobacteriaceae</taxon>
        <taxon>Mycobacterium</taxon>
    </lineage>
</organism>